<gene>
    <name type="primary">HBA</name>
</gene>
<proteinExistence type="evidence at protein level"/>
<name>HBA_RANTA</name>
<keyword id="KW-0007">Acetylation</keyword>
<keyword id="KW-0903">Direct protein sequencing</keyword>
<keyword id="KW-0349">Heme</keyword>
<keyword id="KW-0408">Iron</keyword>
<keyword id="KW-0479">Metal-binding</keyword>
<keyword id="KW-0561">Oxygen transport</keyword>
<keyword id="KW-0597">Phosphoprotein</keyword>
<keyword id="KW-0813">Transport</keyword>
<sequence length="141" mass="15101">VLSAADKSNVKAAWGKVGGNAPAYGAEALERMFLSFPTTKTYFPHFDLSHGSAQVKAHGEKVANALTKAVGHLDDLPGTLSDLSDLHAHKLRVDPVNFKLLSHTLLVTLASHLPSDFTPAVHASLDKFLANVSTVLTSKYR</sequence>
<organism>
    <name type="scientific">Rangifer tarandus</name>
    <name type="common">Reindeer</name>
    <name type="synonym">Cervus tarandus</name>
    <dbReference type="NCBI Taxonomy" id="9870"/>
    <lineage>
        <taxon>Eukaryota</taxon>
        <taxon>Metazoa</taxon>
        <taxon>Chordata</taxon>
        <taxon>Craniata</taxon>
        <taxon>Vertebrata</taxon>
        <taxon>Euteleostomi</taxon>
        <taxon>Mammalia</taxon>
        <taxon>Eutheria</taxon>
        <taxon>Laurasiatheria</taxon>
        <taxon>Artiodactyla</taxon>
        <taxon>Ruminantia</taxon>
        <taxon>Pecora</taxon>
        <taxon>Cervidae</taxon>
        <taxon>Odocoileinae</taxon>
        <taxon>Rangifer</taxon>
    </lineage>
</organism>
<evidence type="ECO:0000250" key="1">
    <source>
        <dbReference type="UniProtKB" id="P01942"/>
    </source>
</evidence>
<evidence type="ECO:0000250" key="2">
    <source>
        <dbReference type="UniProtKB" id="P01946"/>
    </source>
</evidence>
<evidence type="ECO:0000250" key="3">
    <source>
        <dbReference type="UniProtKB" id="P69905"/>
    </source>
</evidence>
<evidence type="ECO:0000255" key="4">
    <source>
        <dbReference type="PROSITE-ProRule" id="PRU00238"/>
    </source>
</evidence>
<dbReference type="PIR" id="S13481">
    <property type="entry name" value="S13481"/>
</dbReference>
<dbReference type="SMR" id="P21379"/>
<dbReference type="GO" id="GO:0072562">
    <property type="term" value="C:blood microparticle"/>
    <property type="evidence" value="ECO:0007669"/>
    <property type="project" value="TreeGrafter"/>
</dbReference>
<dbReference type="GO" id="GO:0031838">
    <property type="term" value="C:haptoglobin-hemoglobin complex"/>
    <property type="evidence" value="ECO:0007669"/>
    <property type="project" value="TreeGrafter"/>
</dbReference>
<dbReference type="GO" id="GO:0005833">
    <property type="term" value="C:hemoglobin complex"/>
    <property type="evidence" value="ECO:0007669"/>
    <property type="project" value="InterPro"/>
</dbReference>
<dbReference type="GO" id="GO:0031720">
    <property type="term" value="F:haptoglobin binding"/>
    <property type="evidence" value="ECO:0007669"/>
    <property type="project" value="TreeGrafter"/>
</dbReference>
<dbReference type="GO" id="GO:0020037">
    <property type="term" value="F:heme binding"/>
    <property type="evidence" value="ECO:0007669"/>
    <property type="project" value="InterPro"/>
</dbReference>
<dbReference type="GO" id="GO:0005506">
    <property type="term" value="F:iron ion binding"/>
    <property type="evidence" value="ECO:0007669"/>
    <property type="project" value="InterPro"/>
</dbReference>
<dbReference type="GO" id="GO:0043177">
    <property type="term" value="F:organic acid binding"/>
    <property type="evidence" value="ECO:0007669"/>
    <property type="project" value="TreeGrafter"/>
</dbReference>
<dbReference type="GO" id="GO:0019825">
    <property type="term" value="F:oxygen binding"/>
    <property type="evidence" value="ECO:0007669"/>
    <property type="project" value="InterPro"/>
</dbReference>
<dbReference type="GO" id="GO:0005344">
    <property type="term" value="F:oxygen carrier activity"/>
    <property type="evidence" value="ECO:0007669"/>
    <property type="project" value="UniProtKB-KW"/>
</dbReference>
<dbReference type="GO" id="GO:0004601">
    <property type="term" value="F:peroxidase activity"/>
    <property type="evidence" value="ECO:0007669"/>
    <property type="project" value="TreeGrafter"/>
</dbReference>
<dbReference type="GO" id="GO:0042744">
    <property type="term" value="P:hydrogen peroxide catabolic process"/>
    <property type="evidence" value="ECO:0007669"/>
    <property type="project" value="TreeGrafter"/>
</dbReference>
<dbReference type="CDD" id="cd08927">
    <property type="entry name" value="Hb-alpha-like"/>
    <property type="match status" value="1"/>
</dbReference>
<dbReference type="FunFam" id="1.10.490.10:FF:000002">
    <property type="entry name" value="Hemoglobin subunit alpha"/>
    <property type="match status" value="1"/>
</dbReference>
<dbReference type="Gene3D" id="1.10.490.10">
    <property type="entry name" value="Globins"/>
    <property type="match status" value="1"/>
</dbReference>
<dbReference type="InterPro" id="IPR000971">
    <property type="entry name" value="Globin"/>
</dbReference>
<dbReference type="InterPro" id="IPR009050">
    <property type="entry name" value="Globin-like_sf"/>
</dbReference>
<dbReference type="InterPro" id="IPR012292">
    <property type="entry name" value="Globin/Proto"/>
</dbReference>
<dbReference type="InterPro" id="IPR002338">
    <property type="entry name" value="Hemoglobin_a-typ"/>
</dbReference>
<dbReference type="InterPro" id="IPR050056">
    <property type="entry name" value="Hemoglobin_oxygen_transport"/>
</dbReference>
<dbReference type="InterPro" id="IPR002339">
    <property type="entry name" value="Hemoglobin_pi"/>
</dbReference>
<dbReference type="PANTHER" id="PTHR11442">
    <property type="entry name" value="HEMOGLOBIN FAMILY MEMBER"/>
    <property type="match status" value="1"/>
</dbReference>
<dbReference type="PANTHER" id="PTHR11442:SF48">
    <property type="entry name" value="HEMOGLOBIN SUBUNIT ALPHA"/>
    <property type="match status" value="1"/>
</dbReference>
<dbReference type="Pfam" id="PF00042">
    <property type="entry name" value="Globin"/>
    <property type="match status" value="1"/>
</dbReference>
<dbReference type="PRINTS" id="PR00612">
    <property type="entry name" value="ALPHAHAEM"/>
</dbReference>
<dbReference type="PRINTS" id="PR00815">
    <property type="entry name" value="PIHAEM"/>
</dbReference>
<dbReference type="SUPFAM" id="SSF46458">
    <property type="entry name" value="Globin-like"/>
    <property type="match status" value="1"/>
</dbReference>
<dbReference type="PROSITE" id="PS01033">
    <property type="entry name" value="GLOBIN"/>
    <property type="match status" value="1"/>
</dbReference>
<comment type="function">
    <text>Involved in oxygen transport from the lung to the various peripheral tissues.</text>
</comment>
<comment type="function">
    <molecule>Hemopressin</molecule>
    <text evidence="2">Hemopressin acts as an antagonist peptide of the cannabinoid receptor CNR1. Hemopressin-binding efficiently blocks cannabinoid receptor CNR1 and subsequent signaling.</text>
</comment>
<comment type="subunit">
    <text>Heterotetramer of two alpha chains and two beta chains.</text>
</comment>
<comment type="tissue specificity">
    <text>Red blood cells.</text>
</comment>
<comment type="similarity">
    <text evidence="4">Belongs to the globin family.</text>
</comment>
<accession>P21379</accession>
<reference key="1">
    <citation type="journal article" date="1991" name="Biochim. Biophys. Acta">
        <title>The primary structure of hemoglobin from reindeer (Rangifer tarandus tarandus) and its functional implications.</title>
        <authorList>
            <person name="Petruzzelli R."/>
            <person name="Barra D."/>
            <person name="Bossa F."/>
            <person name="Condo S.G."/>
            <person name="Brix O."/>
            <person name="Nuutinen M."/>
            <person name="Giardina B."/>
        </authorList>
    </citation>
    <scope>PROTEIN SEQUENCE</scope>
</reference>
<protein>
    <recommendedName>
        <fullName>Hemoglobin subunit alpha</fullName>
    </recommendedName>
    <alternativeName>
        <fullName>Alpha-globin</fullName>
    </alternativeName>
    <alternativeName>
        <fullName>Hemoglobin alpha chain</fullName>
    </alternativeName>
    <component>
        <recommendedName>
            <fullName evidence="2">Hemopressin</fullName>
        </recommendedName>
    </component>
</protein>
<feature type="chain" id="PRO_0000052750" description="Hemoglobin subunit alpha">
    <location>
        <begin position="1"/>
        <end position="141"/>
    </location>
</feature>
<feature type="peptide" id="PRO_0000455937" description="Hemopressin" evidence="2">
    <location>
        <begin position="95"/>
        <end position="103"/>
    </location>
</feature>
<feature type="domain" description="Globin" evidence="4">
    <location>
        <begin position="1"/>
        <end position="141"/>
    </location>
</feature>
<feature type="binding site" evidence="4">
    <location>
        <position position="58"/>
    </location>
    <ligand>
        <name>O2</name>
        <dbReference type="ChEBI" id="CHEBI:15379"/>
    </ligand>
</feature>
<feature type="binding site" description="proximal binding residue" evidence="4">
    <location>
        <position position="87"/>
    </location>
    <ligand>
        <name>heme b</name>
        <dbReference type="ChEBI" id="CHEBI:60344"/>
    </ligand>
    <ligandPart>
        <name>Fe</name>
        <dbReference type="ChEBI" id="CHEBI:18248"/>
    </ligandPart>
</feature>
<feature type="modified residue" description="Phosphoserine" evidence="3">
    <location>
        <position position="3"/>
    </location>
</feature>
<feature type="modified residue" description="N6-succinyllysine" evidence="1">
    <location>
        <position position="7"/>
    </location>
</feature>
<feature type="modified residue" description="N6-succinyllysine" evidence="1">
    <location>
        <position position="11"/>
    </location>
</feature>
<feature type="modified residue" description="N6-acetyllysine; alternate" evidence="3">
    <location>
        <position position="16"/>
    </location>
</feature>
<feature type="modified residue" description="N6-succinyllysine; alternate" evidence="1">
    <location>
        <position position="16"/>
    </location>
</feature>
<feature type="modified residue" description="Phosphotyrosine" evidence="3">
    <location>
        <position position="24"/>
    </location>
</feature>
<feature type="modified residue" description="Phosphoserine" evidence="3">
    <location>
        <position position="35"/>
    </location>
</feature>
<feature type="modified residue" description="N6-succinyllysine" evidence="1">
    <location>
        <position position="40"/>
    </location>
</feature>
<feature type="modified residue" description="Phosphoserine" evidence="3">
    <location>
        <position position="49"/>
    </location>
</feature>
<feature type="modified residue" description="Phosphoserine" evidence="1">
    <location>
        <position position="102"/>
    </location>
</feature>
<feature type="modified residue" description="Phosphothreonine" evidence="1">
    <location>
        <position position="108"/>
    </location>
</feature>
<feature type="modified residue" description="Phosphoserine" evidence="1">
    <location>
        <position position="124"/>
    </location>
</feature>
<feature type="modified residue" description="Phosphothreonine" evidence="1">
    <location>
        <position position="134"/>
    </location>
</feature>
<feature type="modified residue" description="Phosphothreonine" evidence="1">
    <location>
        <position position="137"/>
    </location>
</feature>
<feature type="modified residue" description="Phosphoserine" evidence="1">
    <location>
        <position position="138"/>
    </location>
</feature>